<name>OBG_GEOTN</name>
<evidence type="ECO:0000255" key="1">
    <source>
        <dbReference type="HAMAP-Rule" id="MF_01454"/>
    </source>
</evidence>
<evidence type="ECO:0000255" key="2">
    <source>
        <dbReference type="PROSITE-ProRule" id="PRU01229"/>
    </source>
</evidence>
<evidence type="ECO:0000255" key="3">
    <source>
        <dbReference type="PROSITE-ProRule" id="PRU01231"/>
    </source>
</evidence>
<keyword id="KW-0963">Cytoplasm</keyword>
<keyword id="KW-0342">GTP-binding</keyword>
<keyword id="KW-0378">Hydrolase</keyword>
<keyword id="KW-0460">Magnesium</keyword>
<keyword id="KW-0479">Metal-binding</keyword>
<keyword id="KW-0547">Nucleotide-binding</keyword>
<gene>
    <name evidence="1" type="primary">obg</name>
    <name type="ordered locus">GTNG_2536</name>
</gene>
<feature type="chain" id="PRO_0000385949" description="GTPase Obg">
    <location>
        <begin position="1"/>
        <end position="433"/>
    </location>
</feature>
<feature type="domain" description="Obg" evidence="3">
    <location>
        <begin position="1"/>
        <end position="158"/>
    </location>
</feature>
<feature type="domain" description="OBG-type G" evidence="1">
    <location>
        <begin position="159"/>
        <end position="329"/>
    </location>
</feature>
<feature type="domain" description="OCT" evidence="2">
    <location>
        <begin position="350"/>
        <end position="428"/>
    </location>
</feature>
<feature type="binding site" evidence="1">
    <location>
        <begin position="165"/>
        <end position="172"/>
    </location>
    <ligand>
        <name>GTP</name>
        <dbReference type="ChEBI" id="CHEBI:37565"/>
    </ligand>
</feature>
<feature type="binding site" evidence="1">
    <location>
        <position position="172"/>
    </location>
    <ligand>
        <name>Mg(2+)</name>
        <dbReference type="ChEBI" id="CHEBI:18420"/>
    </ligand>
</feature>
<feature type="binding site" evidence="1">
    <location>
        <begin position="190"/>
        <end position="194"/>
    </location>
    <ligand>
        <name>GTP</name>
        <dbReference type="ChEBI" id="CHEBI:37565"/>
    </ligand>
</feature>
<feature type="binding site" evidence="1">
    <location>
        <position position="192"/>
    </location>
    <ligand>
        <name>Mg(2+)</name>
        <dbReference type="ChEBI" id="CHEBI:18420"/>
    </ligand>
</feature>
<feature type="binding site" evidence="1">
    <location>
        <begin position="212"/>
        <end position="215"/>
    </location>
    <ligand>
        <name>GTP</name>
        <dbReference type="ChEBI" id="CHEBI:37565"/>
    </ligand>
</feature>
<feature type="binding site" evidence="1">
    <location>
        <begin position="282"/>
        <end position="285"/>
    </location>
    <ligand>
        <name>GTP</name>
        <dbReference type="ChEBI" id="CHEBI:37565"/>
    </ligand>
</feature>
<feature type="binding site" evidence="1">
    <location>
        <begin position="310"/>
        <end position="312"/>
    </location>
    <ligand>
        <name>GTP</name>
        <dbReference type="ChEBI" id="CHEBI:37565"/>
    </ligand>
</feature>
<proteinExistence type="inferred from homology"/>
<comment type="function">
    <text evidence="1">An essential GTPase which binds GTP, GDP and possibly (p)ppGpp with moderate affinity, with high nucleotide exchange rates and a fairly low GTP hydrolysis rate. Plays a role in control of the cell cycle, stress response, ribosome biogenesis and in those bacteria that undergo differentiation, in morphogenesis control.</text>
</comment>
<comment type="cofactor">
    <cofactor evidence="1">
        <name>Mg(2+)</name>
        <dbReference type="ChEBI" id="CHEBI:18420"/>
    </cofactor>
</comment>
<comment type="subunit">
    <text evidence="1">Monomer.</text>
</comment>
<comment type="subcellular location">
    <subcellularLocation>
        <location evidence="1">Cytoplasm</location>
    </subcellularLocation>
</comment>
<comment type="similarity">
    <text evidence="1">Belongs to the TRAFAC class OBG-HflX-like GTPase superfamily. OBG GTPase family.</text>
</comment>
<accession>A4IRC7</accession>
<dbReference type="EC" id="3.6.5.-" evidence="1"/>
<dbReference type="EMBL" id="CP000557">
    <property type="protein sequence ID" value="ABO67881.1"/>
    <property type="molecule type" value="Genomic_DNA"/>
</dbReference>
<dbReference type="RefSeq" id="WP_011887904.1">
    <property type="nucleotide sequence ID" value="NC_009328.1"/>
</dbReference>
<dbReference type="SMR" id="A4IRC7"/>
<dbReference type="KEGG" id="gtn:GTNG_2536"/>
<dbReference type="eggNOG" id="COG0536">
    <property type="taxonomic scope" value="Bacteria"/>
</dbReference>
<dbReference type="HOGENOM" id="CLU_011747_2_1_9"/>
<dbReference type="Proteomes" id="UP000001578">
    <property type="component" value="Chromosome"/>
</dbReference>
<dbReference type="GO" id="GO:0005737">
    <property type="term" value="C:cytoplasm"/>
    <property type="evidence" value="ECO:0007669"/>
    <property type="project" value="UniProtKB-SubCell"/>
</dbReference>
<dbReference type="GO" id="GO:0005525">
    <property type="term" value="F:GTP binding"/>
    <property type="evidence" value="ECO:0007669"/>
    <property type="project" value="UniProtKB-UniRule"/>
</dbReference>
<dbReference type="GO" id="GO:0003924">
    <property type="term" value="F:GTPase activity"/>
    <property type="evidence" value="ECO:0007669"/>
    <property type="project" value="UniProtKB-UniRule"/>
</dbReference>
<dbReference type="GO" id="GO:0000287">
    <property type="term" value="F:magnesium ion binding"/>
    <property type="evidence" value="ECO:0007669"/>
    <property type="project" value="InterPro"/>
</dbReference>
<dbReference type="GO" id="GO:0042254">
    <property type="term" value="P:ribosome biogenesis"/>
    <property type="evidence" value="ECO:0007669"/>
    <property type="project" value="UniProtKB-UniRule"/>
</dbReference>
<dbReference type="CDD" id="cd01898">
    <property type="entry name" value="Obg"/>
    <property type="match status" value="1"/>
</dbReference>
<dbReference type="FunFam" id="2.70.210.12:FF:000001">
    <property type="entry name" value="GTPase Obg"/>
    <property type="match status" value="1"/>
</dbReference>
<dbReference type="FunFam" id="3.40.50.300:FF:000515">
    <property type="entry name" value="GTPase Obg"/>
    <property type="match status" value="1"/>
</dbReference>
<dbReference type="Gene3D" id="3.30.300.350">
    <property type="entry name" value="GTP-binding protein OBG, C-terminal domain"/>
    <property type="match status" value="1"/>
</dbReference>
<dbReference type="Gene3D" id="2.70.210.12">
    <property type="entry name" value="GTP1/OBG domain"/>
    <property type="match status" value="1"/>
</dbReference>
<dbReference type="Gene3D" id="3.40.50.300">
    <property type="entry name" value="P-loop containing nucleotide triphosphate hydrolases"/>
    <property type="match status" value="1"/>
</dbReference>
<dbReference type="HAMAP" id="MF_01454">
    <property type="entry name" value="GTPase_Obg"/>
    <property type="match status" value="1"/>
</dbReference>
<dbReference type="InterPro" id="IPR031167">
    <property type="entry name" value="G_OBG"/>
</dbReference>
<dbReference type="InterPro" id="IPR006073">
    <property type="entry name" value="GTP-bd"/>
</dbReference>
<dbReference type="InterPro" id="IPR014100">
    <property type="entry name" value="GTP-bd_Obg/CgtA"/>
</dbReference>
<dbReference type="InterPro" id="IPR036346">
    <property type="entry name" value="GTP-bd_prot_GTP1/OBG_C_sf"/>
</dbReference>
<dbReference type="InterPro" id="IPR006074">
    <property type="entry name" value="GTP1-OBG_CS"/>
</dbReference>
<dbReference type="InterPro" id="IPR006169">
    <property type="entry name" value="GTP1_OBG_dom"/>
</dbReference>
<dbReference type="InterPro" id="IPR036726">
    <property type="entry name" value="GTP1_OBG_dom_sf"/>
</dbReference>
<dbReference type="InterPro" id="IPR045086">
    <property type="entry name" value="OBG_GTPase"/>
</dbReference>
<dbReference type="InterPro" id="IPR015349">
    <property type="entry name" value="OCT_dom"/>
</dbReference>
<dbReference type="InterPro" id="IPR027417">
    <property type="entry name" value="P-loop_NTPase"/>
</dbReference>
<dbReference type="InterPro" id="IPR005225">
    <property type="entry name" value="Small_GTP-bd"/>
</dbReference>
<dbReference type="NCBIfam" id="TIGR02729">
    <property type="entry name" value="Obg_CgtA"/>
    <property type="match status" value="1"/>
</dbReference>
<dbReference type="NCBIfam" id="TIGR03595">
    <property type="entry name" value="Obg_CgtA_exten"/>
    <property type="match status" value="1"/>
</dbReference>
<dbReference type="NCBIfam" id="NF008954">
    <property type="entry name" value="PRK12296.1"/>
    <property type="match status" value="1"/>
</dbReference>
<dbReference type="NCBIfam" id="NF008955">
    <property type="entry name" value="PRK12297.1"/>
    <property type="match status" value="1"/>
</dbReference>
<dbReference type="NCBIfam" id="NF008956">
    <property type="entry name" value="PRK12299.1"/>
    <property type="match status" value="1"/>
</dbReference>
<dbReference type="NCBIfam" id="TIGR00231">
    <property type="entry name" value="small_GTP"/>
    <property type="match status" value="1"/>
</dbReference>
<dbReference type="PANTHER" id="PTHR11702">
    <property type="entry name" value="DEVELOPMENTALLY REGULATED GTP-BINDING PROTEIN-RELATED"/>
    <property type="match status" value="1"/>
</dbReference>
<dbReference type="PANTHER" id="PTHR11702:SF31">
    <property type="entry name" value="MITOCHONDRIAL RIBOSOME-ASSOCIATED GTPASE 2"/>
    <property type="match status" value="1"/>
</dbReference>
<dbReference type="Pfam" id="PF09269">
    <property type="entry name" value="DUF1967"/>
    <property type="match status" value="1"/>
</dbReference>
<dbReference type="Pfam" id="PF01018">
    <property type="entry name" value="GTP1_OBG"/>
    <property type="match status" value="1"/>
</dbReference>
<dbReference type="Pfam" id="PF01926">
    <property type="entry name" value="MMR_HSR1"/>
    <property type="match status" value="1"/>
</dbReference>
<dbReference type="PRINTS" id="PR00326">
    <property type="entry name" value="GTP1OBG"/>
</dbReference>
<dbReference type="SUPFAM" id="SSF102741">
    <property type="entry name" value="Obg GTP-binding protein C-terminal domain"/>
    <property type="match status" value="1"/>
</dbReference>
<dbReference type="SUPFAM" id="SSF82051">
    <property type="entry name" value="Obg GTP-binding protein N-terminal domain"/>
    <property type="match status" value="1"/>
</dbReference>
<dbReference type="SUPFAM" id="SSF52540">
    <property type="entry name" value="P-loop containing nucleoside triphosphate hydrolases"/>
    <property type="match status" value="1"/>
</dbReference>
<dbReference type="PROSITE" id="PS51710">
    <property type="entry name" value="G_OBG"/>
    <property type="match status" value="1"/>
</dbReference>
<dbReference type="PROSITE" id="PS00905">
    <property type="entry name" value="GTP1_OBG"/>
    <property type="match status" value="1"/>
</dbReference>
<dbReference type="PROSITE" id="PS51883">
    <property type="entry name" value="OBG"/>
    <property type="match status" value="1"/>
</dbReference>
<dbReference type="PROSITE" id="PS51881">
    <property type="entry name" value="OCT"/>
    <property type="match status" value="1"/>
</dbReference>
<sequence>MFVDQVKIYVKGGDGGNGMVAFRREKYVPKGGPAGGDGGKGGDVVFVVDEGLRTLMDFRYQRHFKAPRGENGMSKNQHGKNAEDLLVKVPPGTVVIDADTNEVLADLTEQGQRFVVAKGGRGGRGNTRFATAANPAPEIAENGEPGEERNVILELKLLADVGLVGFPSVGKSTLLSVVSAARPKIAEYHFTTLVPNLGVVETEDGRSFVMADLPGLIEGAHEGVGLGHQFLRHIERTRVIVHVIDMAAVEGRDPYDDYVVINEELKQYNLRLTERPQIVAANKMDMPNAEENLRRFKEKVGEAVPVFPISAATRQGVRELLFAIADLLETTPEFPLHELEEPAVQRVVYKYEKEELPFTITRGSDGAFILSGEKIEKLFKMTDFSREESVRRFARQLRAMGVDDALRERGAKDGDTVRLLDYEFEFVDDWDER</sequence>
<organism>
    <name type="scientific">Geobacillus thermodenitrificans (strain NG80-2)</name>
    <dbReference type="NCBI Taxonomy" id="420246"/>
    <lineage>
        <taxon>Bacteria</taxon>
        <taxon>Bacillati</taxon>
        <taxon>Bacillota</taxon>
        <taxon>Bacilli</taxon>
        <taxon>Bacillales</taxon>
        <taxon>Anoxybacillaceae</taxon>
        <taxon>Geobacillus</taxon>
    </lineage>
</organism>
<reference key="1">
    <citation type="journal article" date="2007" name="Proc. Natl. Acad. Sci. U.S.A.">
        <title>Genome and proteome of long-chain alkane degrading Geobacillus thermodenitrificans NG80-2 isolated from a deep-subsurface oil reservoir.</title>
        <authorList>
            <person name="Feng L."/>
            <person name="Wang W."/>
            <person name="Cheng J."/>
            <person name="Ren Y."/>
            <person name="Zhao G."/>
            <person name="Gao C."/>
            <person name="Tang Y."/>
            <person name="Liu X."/>
            <person name="Han W."/>
            <person name="Peng X."/>
            <person name="Liu R."/>
            <person name="Wang L."/>
        </authorList>
    </citation>
    <scope>NUCLEOTIDE SEQUENCE [LARGE SCALE GENOMIC DNA]</scope>
    <source>
        <strain>NG80-2</strain>
    </source>
</reference>
<protein>
    <recommendedName>
        <fullName evidence="1">GTPase Obg</fullName>
        <ecNumber evidence="1">3.6.5.-</ecNumber>
    </recommendedName>
    <alternativeName>
        <fullName evidence="1">GTP-binding protein Obg</fullName>
    </alternativeName>
</protein>